<keyword id="KW-0489">Methyltransferase</keyword>
<keyword id="KW-0949">S-adenosyl-L-methionine</keyword>
<keyword id="KW-0808">Transferase</keyword>
<keyword id="KW-0831">Ubiquinone biosynthesis</keyword>
<protein>
    <recommendedName>
        <fullName evidence="1">Ubiquinone biosynthesis O-methyltransferase</fullName>
    </recommendedName>
    <alternativeName>
        <fullName evidence="1">2-polyprenyl-6-hydroxyphenol methylase</fullName>
        <ecNumber evidence="1">2.1.1.222</ecNumber>
    </alternativeName>
    <alternativeName>
        <fullName evidence="1">3-demethylubiquinone 3-O-methyltransferase</fullName>
        <ecNumber evidence="1">2.1.1.64</ecNumber>
    </alternativeName>
</protein>
<evidence type="ECO:0000255" key="1">
    <source>
        <dbReference type="HAMAP-Rule" id="MF_00472"/>
    </source>
</evidence>
<accession>B5RCA1</accession>
<reference key="1">
    <citation type="journal article" date="2008" name="Genome Res.">
        <title>Comparative genome analysis of Salmonella enteritidis PT4 and Salmonella gallinarum 287/91 provides insights into evolutionary and host adaptation pathways.</title>
        <authorList>
            <person name="Thomson N.R."/>
            <person name="Clayton D.J."/>
            <person name="Windhorst D."/>
            <person name="Vernikos G."/>
            <person name="Davidson S."/>
            <person name="Churcher C."/>
            <person name="Quail M.A."/>
            <person name="Stevens M."/>
            <person name="Jones M.A."/>
            <person name="Watson M."/>
            <person name="Barron A."/>
            <person name="Layton A."/>
            <person name="Pickard D."/>
            <person name="Kingsley R.A."/>
            <person name="Bignell A."/>
            <person name="Clark L."/>
            <person name="Harris B."/>
            <person name="Ormond D."/>
            <person name="Abdellah Z."/>
            <person name="Brooks K."/>
            <person name="Cherevach I."/>
            <person name="Chillingworth T."/>
            <person name="Woodward J."/>
            <person name="Norberczak H."/>
            <person name="Lord A."/>
            <person name="Arrowsmith C."/>
            <person name="Jagels K."/>
            <person name="Moule S."/>
            <person name="Mungall K."/>
            <person name="Saunders M."/>
            <person name="Whitehead S."/>
            <person name="Chabalgoity J.A."/>
            <person name="Maskell D."/>
            <person name="Humphreys T."/>
            <person name="Roberts M."/>
            <person name="Barrow P.A."/>
            <person name="Dougan G."/>
            <person name="Parkhill J."/>
        </authorList>
    </citation>
    <scope>NUCLEOTIDE SEQUENCE [LARGE SCALE GENOMIC DNA]</scope>
    <source>
        <strain>287/91 / NCTC 13346</strain>
    </source>
</reference>
<dbReference type="EC" id="2.1.1.222" evidence="1"/>
<dbReference type="EC" id="2.1.1.64" evidence="1"/>
<dbReference type="EMBL" id="AM933173">
    <property type="protein sequence ID" value="CAR38135.1"/>
    <property type="molecule type" value="Genomic_DNA"/>
</dbReference>
<dbReference type="RefSeq" id="WP_001091008.1">
    <property type="nucleotide sequence ID" value="NC_011274.1"/>
</dbReference>
<dbReference type="SMR" id="B5RCA1"/>
<dbReference type="KEGG" id="seg:SG2304"/>
<dbReference type="HOGENOM" id="CLU_042432_5_0_6"/>
<dbReference type="UniPathway" id="UPA00232"/>
<dbReference type="Proteomes" id="UP000008321">
    <property type="component" value="Chromosome"/>
</dbReference>
<dbReference type="GO" id="GO:0102208">
    <property type="term" value="F:2-polyprenyl-6-hydroxyphenol methylase activity"/>
    <property type="evidence" value="ECO:0007669"/>
    <property type="project" value="UniProtKB-EC"/>
</dbReference>
<dbReference type="GO" id="GO:0061542">
    <property type="term" value="F:3-demethylubiquinol 3-O-methyltransferase activity"/>
    <property type="evidence" value="ECO:0007669"/>
    <property type="project" value="UniProtKB-UniRule"/>
</dbReference>
<dbReference type="GO" id="GO:0010420">
    <property type="term" value="F:polyprenyldihydroxybenzoate methyltransferase activity"/>
    <property type="evidence" value="ECO:0007669"/>
    <property type="project" value="InterPro"/>
</dbReference>
<dbReference type="GO" id="GO:0032259">
    <property type="term" value="P:methylation"/>
    <property type="evidence" value="ECO:0007669"/>
    <property type="project" value="UniProtKB-KW"/>
</dbReference>
<dbReference type="CDD" id="cd02440">
    <property type="entry name" value="AdoMet_MTases"/>
    <property type="match status" value="1"/>
</dbReference>
<dbReference type="FunFam" id="3.40.50.150:FF:000028">
    <property type="entry name" value="Ubiquinone biosynthesis O-methyltransferase"/>
    <property type="match status" value="1"/>
</dbReference>
<dbReference type="Gene3D" id="3.40.50.150">
    <property type="entry name" value="Vaccinia Virus protein VP39"/>
    <property type="match status" value="1"/>
</dbReference>
<dbReference type="HAMAP" id="MF_00472">
    <property type="entry name" value="UbiG"/>
    <property type="match status" value="1"/>
</dbReference>
<dbReference type="InterPro" id="IPR029063">
    <property type="entry name" value="SAM-dependent_MTases_sf"/>
</dbReference>
<dbReference type="InterPro" id="IPR010233">
    <property type="entry name" value="UbiG_MeTrfase"/>
</dbReference>
<dbReference type="NCBIfam" id="TIGR01983">
    <property type="entry name" value="UbiG"/>
    <property type="match status" value="1"/>
</dbReference>
<dbReference type="PANTHER" id="PTHR43464">
    <property type="entry name" value="METHYLTRANSFERASE"/>
    <property type="match status" value="1"/>
</dbReference>
<dbReference type="PANTHER" id="PTHR43464:SF19">
    <property type="entry name" value="UBIQUINONE BIOSYNTHESIS O-METHYLTRANSFERASE, MITOCHONDRIAL"/>
    <property type="match status" value="1"/>
</dbReference>
<dbReference type="Pfam" id="PF13489">
    <property type="entry name" value="Methyltransf_23"/>
    <property type="match status" value="1"/>
</dbReference>
<dbReference type="SUPFAM" id="SSF53335">
    <property type="entry name" value="S-adenosyl-L-methionine-dependent methyltransferases"/>
    <property type="match status" value="1"/>
</dbReference>
<sequence>MNTEKPSVAHNVDHNEIAKFEAVASRWWDLEGEFKPLHRINPLRLGYITERSGGLFGKKVLDVGCGGGILAESMAREGATVTGLDMGFEPLQVAKLHALESGIEVEYMQETVEEHAAKHAQQYDVVTCMEMLEHVPDPQSVVHACAQLVKPGGEVFFSTLNRNGKSWLMAVVGAEYILRMVPKGTHDVKKFIKPAELLSWVDETVLKEQHITGLHYNPITNTFKLGPGVDVNYMLHTRAKKA</sequence>
<name>UBIG_SALG2</name>
<proteinExistence type="inferred from homology"/>
<comment type="function">
    <text evidence="1">O-methyltransferase that catalyzes the 2 O-methylation steps in the ubiquinone biosynthetic pathway.</text>
</comment>
<comment type="catalytic activity">
    <reaction evidence="1">
        <text>a 3-demethylubiquinol + S-adenosyl-L-methionine = a ubiquinol + S-adenosyl-L-homocysteine + H(+)</text>
        <dbReference type="Rhea" id="RHEA:44380"/>
        <dbReference type="Rhea" id="RHEA-COMP:9566"/>
        <dbReference type="Rhea" id="RHEA-COMP:10914"/>
        <dbReference type="ChEBI" id="CHEBI:15378"/>
        <dbReference type="ChEBI" id="CHEBI:17976"/>
        <dbReference type="ChEBI" id="CHEBI:57856"/>
        <dbReference type="ChEBI" id="CHEBI:59789"/>
        <dbReference type="ChEBI" id="CHEBI:84422"/>
        <dbReference type="EC" id="2.1.1.64"/>
    </reaction>
</comment>
<comment type="catalytic activity">
    <reaction evidence="1">
        <text>a 3-(all-trans-polyprenyl)benzene-1,2-diol + S-adenosyl-L-methionine = a 2-methoxy-6-(all-trans-polyprenyl)phenol + S-adenosyl-L-homocysteine + H(+)</text>
        <dbReference type="Rhea" id="RHEA:31411"/>
        <dbReference type="Rhea" id="RHEA-COMP:9550"/>
        <dbReference type="Rhea" id="RHEA-COMP:9551"/>
        <dbReference type="ChEBI" id="CHEBI:15378"/>
        <dbReference type="ChEBI" id="CHEBI:57856"/>
        <dbReference type="ChEBI" id="CHEBI:59789"/>
        <dbReference type="ChEBI" id="CHEBI:62729"/>
        <dbReference type="ChEBI" id="CHEBI:62731"/>
        <dbReference type="EC" id="2.1.1.222"/>
    </reaction>
</comment>
<comment type="pathway">
    <text evidence="1">Cofactor biosynthesis; ubiquinone biosynthesis.</text>
</comment>
<comment type="similarity">
    <text evidence="1">Belongs to the methyltransferase superfamily. UbiG/COQ3 family.</text>
</comment>
<gene>
    <name evidence="1" type="primary">ubiG</name>
    <name type="ordered locus">SG2304</name>
</gene>
<feature type="chain" id="PRO_1000199698" description="Ubiquinone biosynthesis O-methyltransferase">
    <location>
        <begin position="1"/>
        <end position="242"/>
    </location>
</feature>
<feature type="binding site" evidence="1">
    <location>
        <position position="44"/>
    </location>
    <ligand>
        <name>S-adenosyl-L-methionine</name>
        <dbReference type="ChEBI" id="CHEBI:59789"/>
    </ligand>
</feature>
<feature type="binding site" evidence="1">
    <location>
        <position position="64"/>
    </location>
    <ligand>
        <name>S-adenosyl-L-methionine</name>
        <dbReference type="ChEBI" id="CHEBI:59789"/>
    </ligand>
</feature>
<feature type="binding site" evidence="1">
    <location>
        <position position="85"/>
    </location>
    <ligand>
        <name>S-adenosyl-L-methionine</name>
        <dbReference type="ChEBI" id="CHEBI:59789"/>
    </ligand>
</feature>
<feature type="binding site" evidence="1">
    <location>
        <position position="129"/>
    </location>
    <ligand>
        <name>S-adenosyl-L-methionine</name>
        <dbReference type="ChEBI" id="CHEBI:59789"/>
    </ligand>
</feature>
<organism>
    <name type="scientific">Salmonella gallinarum (strain 287/91 / NCTC 13346)</name>
    <dbReference type="NCBI Taxonomy" id="550538"/>
    <lineage>
        <taxon>Bacteria</taxon>
        <taxon>Pseudomonadati</taxon>
        <taxon>Pseudomonadota</taxon>
        <taxon>Gammaproteobacteria</taxon>
        <taxon>Enterobacterales</taxon>
        <taxon>Enterobacteriaceae</taxon>
        <taxon>Salmonella</taxon>
    </lineage>
</organism>